<gene>
    <name evidence="1" type="primary">tpiA</name>
    <name type="ordered locus">Aflv_2516</name>
</gene>
<accession>B7GL26</accession>
<proteinExistence type="inferred from homology"/>
<name>TPIS_ANOFW</name>
<organism>
    <name type="scientific">Anoxybacillus flavithermus (strain DSM 21510 / WK1)</name>
    <dbReference type="NCBI Taxonomy" id="491915"/>
    <lineage>
        <taxon>Bacteria</taxon>
        <taxon>Bacillati</taxon>
        <taxon>Bacillota</taxon>
        <taxon>Bacilli</taxon>
        <taxon>Bacillales</taxon>
        <taxon>Anoxybacillaceae</taxon>
        <taxon>Anoxybacillus</taxon>
    </lineage>
</organism>
<dbReference type="EC" id="5.3.1.1" evidence="1"/>
<dbReference type="EMBL" id="CP000922">
    <property type="protein sequence ID" value="ACJ34871.1"/>
    <property type="molecule type" value="Genomic_DNA"/>
</dbReference>
<dbReference type="RefSeq" id="WP_006322696.1">
    <property type="nucleotide sequence ID" value="NC_011567.1"/>
</dbReference>
<dbReference type="SMR" id="B7GL26"/>
<dbReference type="STRING" id="491915.Aflv_2516"/>
<dbReference type="GeneID" id="7038789"/>
<dbReference type="KEGG" id="afl:Aflv_2516"/>
<dbReference type="eggNOG" id="COG0149">
    <property type="taxonomic scope" value="Bacteria"/>
</dbReference>
<dbReference type="HOGENOM" id="CLU_024251_2_3_9"/>
<dbReference type="UniPathway" id="UPA00109">
    <property type="reaction ID" value="UER00189"/>
</dbReference>
<dbReference type="UniPathway" id="UPA00138"/>
<dbReference type="Proteomes" id="UP000000742">
    <property type="component" value="Chromosome"/>
</dbReference>
<dbReference type="GO" id="GO:0005829">
    <property type="term" value="C:cytosol"/>
    <property type="evidence" value="ECO:0007669"/>
    <property type="project" value="TreeGrafter"/>
</dbReference>
<dbReference type="GO" id="GO:0004807">
    <property type="term" value="F:triose-phosphate isomerase activity"/>
    <property type="evidence" value="ECO:0007669"/>
    <property type="project" value="UniProtKB-UniRule"/>
</dbReference>
<dbReference type="GO" id="GO:0006094">
    <property type="term" value="P:gluconeogenesis"/>
    <property type="evidence" value="ECO:0007669"/>
    <property type="project" value="UniProtKB-UniRule"/>
</dbReference>
<dbReference type="GO" id="GO:0046166">
    <property type="term" value="P:glyceraldehyde-3-phosphate biosynthetic process"/>
    <property type="evidence" value="ECO:0007669"/>
    <property type="project" value="TreeGrafter"/>
</dbReference>
<dbReference type="GO" id="GO:0019563">
    <property type="term" value="P:glycerol catabolic process"/>
    <property type="evidence" value="ECO:0007669"/>
    <property type="project" value="TreeGrafter"/>
</dbReference>
<dbReference type="GO" id="GO:0006096">
    <property type="term" value="P:glycolytic process"/>
    <property type="evidence" value="ECO:0007669"/>
    <property type="project" value="UniProtKB-UniRule"/>
</dbReference>
<dbReference type="CDD" id="cd00311">
    <property type="entry name" value="TIM"/>
    <property type="match status" value="1"/>
</dbReference>
<dbReference type="FunFam" id="3.20.20.70:FF:000016">
    <property type="entry name" value="Triosephosphate isomerase"/>
    <property type="match status" value="1"/>
</dbReference>
<dbReference type="Gene3D" id="3.20.20.70">
    <property type="entry name" value="Aldolase class I"/>
    <property type="match status" value="1"/>
</dbReference>
<dbReference type="HAMAP" id="MF_00147_B">
    <property type="entry name" value="TIM_B"/>
    <property type="match status" value="1"/>
</dbReference>
<dbReference type="InterPro" id="IPR013785">
    <property type="entry name" value="Aldolase_TIM"/>
</dbReference>
<dbReference type="InterPro" id="IPR035990">
    <property type="entry name" value="TIM_sf"/>
</dbReference>
<dbReference type="InterPro" id="IPR022896">
    <property type="entry name" value="TrioseP_Isoase_bac/euk"/>
</dbReference>
<dbReference type="InterPro" id="IPR000652">
    <property type="entry name" value="Triosephosphate_isomerase"/>
</dbReference>
<dbReference type="InterPro" id="IPR020861">
    <property type="entry name" value="Triosephosphate_isomerase_AS"/>
</dbReference>
<dbReference type="NCBIfam" id="TIGR00419">
    <property type="entry name" value="tim"/>
    <property type="match status" value="1"/>
</dbReference>
<dbReference type="PANTHER" id="PTHR21139">
    <property type="entry name" value="TRIOSEPHOSPHATE ISOMERASE"/>
    <property type="match status" value="1"/>
</dbReference>
<dbReference type="PANTHER" id="PTHR21139:SF42">
    <property type="entry name" value="TRIOSEPHOSPHATE ISOMERASE"/>
    <property type="match status" value="1"/>
</dbReference>
<dbReference type="Pfam" id="PF00121">
    <property type="entry name" value="TIM"/>
    <property type="match status" value="1"/>
</dbReference>
<dbReference type="SUPFAM" id="SSF51351">
    <property type="entry name" value="Triosephosphate isomerase (TIM)"/>
    <property type="match status" value="1"/>
</dbReference>
<dbReference type="PROSITE" id="PS00171">
    <property type="entry name" value="TIM_1"/>
    <property type="match status" value="1"/>
</dbReference>
<dbReference type="PROSITE" id="PS51440">
    <property type="entry name" value="TIM_2"/>
    <property type="match status" value="1"/>
</dbReference>
<protein>
    <recommendedName>
        <fullName evidence="1">Triosephosphate isomerase</fullName>
        <shortName evidence="1">TIM</shortName>
        <shortName evidence="1">TPI</shortName>
        <ecNumber evidence="1">5.3.1.1</ecNumber>
    </recommendedName>
    <alternativeName>
        <fullName evidence="1">Triose-phosphate isomerase</fullName>
    </alternativeName>
</protein>
<comment type="function">
    <text evidence="1">Involved in the gluconeogenesis. Catalyzes stereospecifically the conversion of dihydroxyacetone phosphate (DHAP) to D-glyceraldehyde-3-phosphate (G3P).</text>
</comment>
<comment type="catalytic activity">
    <reaction evidence="1">
        <text>D-glyceraldehyde 3-phosphate = dihydroxyacetone phosphate</text>
        <dbReference type="Rhea" id="RHEA:18585"/>
        <dbReference type="ChEBI" id="CHEBI:57642"/>
        <dbReference type="ChEBI" id="CHEBI:59776"/>
        <dbReference type="EC" id="5.3.1.1"/>
    </reaction>
</comment>
<comment type="pathway">
    <text evidence="1">Carbohydrate biosynthesis; gluconeogenesis.</text>
</comment>
<comment type="pathway">
    <text evidence="1">Carbohydrate degradation; glycolysis; D-glyceraldehyde 3-phosphate from glycerone phosphate: step 1/1.</text>
</comment>
<comment type="subunit">
    <text evidence="1">Homodimer.</text>
</comment>
<comment type="subcellular location">
    <subcellularLocation>
        <location evidence="1">Cytoplasm</location>
    </subcellularLocation>
</comment>
<comment type="similarity">
    <text evidence="1">Belongs to the triosephosphate isomerase family.</text>
</comment>
<reference key="1">
    <citation type="journal article" date="2008" name="Genome Biol.">
        <title>Encapsulated in silica: genome, proteome and physiology of the thermophilic bacterium Anoxybacillus flavithermus WK1.</title>
        <authorList>
            <person name="Saw J.H."/>
            <person name="Mountain B.W."/>
            <person name="Feng L."/>
            <person name="Omelchenko M.V."/>
            <person name="Hou S."/>
            <person name="Saito J.A."/>
            <person name="Stott M.B."/>
            <person name="Li D."/>
            <person name="Zhao G."/>
            <person name="Wu J."/>
            <person name="Galperin M.Y."/>
            <person name="Koonin E.V."/>
            <person name="Makarova K.S."/>
            <person name="Wolf Y.I."/>
            <person name="Rigden D.J."/>
            <person name="Dunfield P.F."/>
            <person name="Wang L."/>
            <person name="Alam M."/>
        </authorList>
    </citation>
    <scope>NUCLEOTIDE SEQUENCE [LARGE SCALE GENOMIC DNA]</scope>
    <source>
        <strain>DSM 21510 / WK1</strain>
    </source>
</reference>
<keyword id="KW-0963">Cytoplasm</keyword>
<keyword id="KW-0312">Gluconeogenesis</keyword>
<keyword id="KW-0324">Glycolysis</keyword>
<keyword id="KW-0413">Isomerase</keyword>
<keyword id="KW-0597">Phosphoprotein</keyword>
<feature type="chain" id="PRO_1000117994" description="Triosephosphate isomerase">
    <location>
        <begin position="1"/>
        <end position="251"/>
    </location>
</feature>
<feature type="active site" description="Electrophile" evidence="1">
    <location>
        <position position="95"/>
    </location>
</feature>
<feature type="active site" description="Proton acceptor" evidence="1">
    <location>
        <position position="167"/>
    </location>
</feature>
<feature type="binding site" evidence="1">
    <location>
        <begin position="9"/>
        <end position="11"/>
    </location>
    <ligand>
        <name>substrate</name>
    </ligand>
</feature>
<feature type="binding site" evidence="1">
    <location>
        <position position="173"/>
    </location>
    <ligand>
        <name>substrate</name>
    </ligand>
</feature>
<feature type="binding site" evidence="1">
    <location>
        <position position="213"/>
    </location>
    <ligand>
        <name>substrate</name>
    </ligand>
</feature>
<feature type="binding site" evidence="1">
    <location>
        <begin position="234"/>
        <end position="235"/>
    </location>
    <ligand>
        <name>substrate</name>
    </ligand>
</feature>
<feature type="modified residue" description="Phosphoserine" evidence="1">
    <location>
        <position position="213"/>
    </location>
</feature>
<evidence type="ECO:0000255" key="1">
    <source>
        <dbReference type="HAMAP-Rule" id="MF_00147"/>
    </source>
</evidence>
<sequence>MRKPIIAGNWKMHKTLKEALQFVEEVKHEVPSNEQVDAVVCAPALFLAHLVEATKGTNVKIGAQNMHFEDQGAFTGEISPVALKDLGVEYVIIGHSERREMFAETDETVNKKVLAAFKHGLVPIVCCGETLEERESNRTNEVVRVQVEKALEGLTEEQVKQVVIAYEPIWAIGTGKSSTAEDANNVCGYIRQVIANKFSQEAANAVRIQYGGSVKPENIAAFLAEEHIDGALVGGASLQPQSFLQLVEAGK</sequence>